<sequence>MSESAPTPRRERVIVGMSGGVDSSVSALLLLQQGYQVEGLFMKNWDEDDGTEYCTAREDLADAQAVCDRIGIKLHTANFAAEYWDNVFEHFLAEYKAGRTPNPDILCNREIKFKAFLDYALMLGADLIATGHYVRRRDRDGRTELLKGLDPNKDQSYFLHAVGGEQIARSLFPVGELEKPEVRAIAEKHGLATAKKKDSTGICFIGERRFTDFLKQYLPAQPGDIETIEGKVIGRHSGLMYHTIGQRQGLGIGGLKEAGDDPWYVLGKDLQRNVLLVGQGNDHPLLFSRALLASRIYWVNPVELERPRRLRAKVRYRQSDQDCVLEKTAEGYRAVFDEPQRAVTPGQSVVFYDGDVCLGGGVIETAEAWDFGGRP</sequence>
<proteinExistence type="inferred from homology"/>
<reference key="1">
    <citation type="journal article" date="2009" name="Genome Res.">
        <title>Newly introduced genomic prophage islands are critical determinants of in vivo competitiveness in the Liverpool epidemic strain of Pseudomonas aeruginosa.</title>
        <authorList>
            <person name="Winstanley C."/>
            <person name="Langille M.G.I."/>
            <person name="Fothergill J.L."/>
            <person name="Kukavica-Ibrulj I."/>
            <person name="Paradis-Bleau C."/>
            <person name="Sanschagrin F."/>
            <person name="Thomson N.R."/>
            <person name="Winsor G.L."/>
            <person name="Quail M.A."/>
            <person name="Lennard N."/>
            <person name="Bignell A."/>
            <person name="Clarke L."/>
            <person name="Seeger K."/>
            <person name="Saunders D."/>
            <person name="Harris D."/>
            <person name="Parkhill J."/>
            <person name="Hancock R.E.W."/>
            <person name="Brinkman F.S.L."/>
            <person name="Levesque R.C."/>
        </authorList>
    </citation>
    <scope>NUCLEOTIDE SEQUENCE [LARGE SCALE GENOMIC DNA]</scope>
    <source>
        <strain>LESB58</strain>
    </source>
</reference>
<feature type="chain" id="PRO_1000198620" description="tRNA-specific 2-thiouridylase MnmA">
    <location>
        <begin position="1"/>
        <end position="375"/>
    </location>
</feature>
<feature type="region of interest" description="Interaction with target base in tRNA" evidence="1">
    <location>
        <begin position="102"/>
        <end position="104"/>
    </location>
</feature>
<feature type="region of interest" description="Interaction with tRNA" evidence="1">
    <location>
        <begin position="153"/>
        <end position="155"/>
    </location>
</feature>
<feature type="region of interest" description="Interaction with tRNA" evidence="1">
    <location>
        <begin position="315"/>
        <end position="316"/>
    </location>
</feature>
<feature type="active site" description="Nucleophile" evidence="1">
    <location>
        <position position="107"/>
    </location>
</feature>
<feature type="active site" description="Cysteine persulfide intermediate" evidence="1">
    <location>
        <position position="203"/>
    </location>
</feature>
<feature type="binding site" evidence="1">
    <location>
        <begin position="16"/>
        <end position="23"/>
    </location>
    <ligand>
        <name>ATP</name>
        <dbReference type="ChEBI" id="CHEBI:30616"/>
    </ligand>
</feature>
<feature type="binding site" evidence="1">
    <location>
        <position position="42"/>
    </location>
    <ligand>
        <name>ATP</name>
        <dbReference type="ChEBI" id="CHEBI:30616"/>
    </ligand>
</feature>
<feature type="binding site" evidence="1">
    <location>
        <position position="131"/>
    </location>
    <ligand>
        <name>ATP</name>
        <dbReference type="ChEBI" id="CHEBI:30616"/>
    </ligand>
</feature>
<feature type="site" description="Interaction with tRNA" evidence="1">
    <location>
        <position position="132"/>
    </location>
</feature>
<feature type="site" description="Interaction with tRNA" evidence="1">
    <location>
        <position position="347"/>
    </location>
</feature>
<feature type="disulfide bond" description="Alternate" evidence="1">
    <location>
        <begin position="107"/>
        <end position="203"/>
    </location>
</feature>
<protein>
    <recommendedName>
        <fullName evidence="1">tRNA-specific 2-thiouridylase MnmA</fullName>
        <ecNumber evidence="1">2.8.1.13</ecNumber>
    </recommendedName>
</protein>
<gene>
    <name evidence="1" type="primary">mnmA</name>
    <name type="ordered locus">PLES_24791</name>
</gene>
<evidence type="ECO:0000255" key="1">
    <source>
        <dbReference type="HAMAP-Rule" id="MF_00144"/>
    </source>
</evidence>
<comment type="function">
    <text evidence="1">Catalyzes the 2-thiolation of uridine at the wobble position (U34) of tRNA, leading to the formation of s(2)U34.</text>
</comment>
<comment type="catalytic activity">
    <reaction evidence="1">
        <text>S-sulfanyl-L-cysteinyl-[protein] + uridine(34) in tRNA + AH2 + ATP = 2-thiouridine(34) in tRNA + L-cysteinyl-[protein] + A + AMP + diphosphate + H(+)</text>
        <dbReference type="Rhea" id="RHEA:47032"/>
        <dbReference type="Rhea" id="RHEA-COMP:10131"/>
        <dbReference type="Rhea" id="RHEA-COMP:11726"/>
        <dbReference type="Rhea" id="RHEA-COMP:11727"/>
        <dbReference type="Rhea" id="RHEA-COMP:11728"/>
        <dbReference type="ChEBI" id="CHEBI:13193"/>
        <dbReference type="ChEBI" id="CHEBI:15378"/>
        <dbReference type="ChEBI" id="CHEBI:17499"/>
        <dbReference type="ChEBI" id="CHEBI:29950"/>
        <dbReference type="ChEBI" id="CHEBI:30616"/>
        <dbReference type="ChEBI" id="CHEBI:33019"/>
        <dbReference type="ChEBI" id="CHEBI:61963"/>
        <dbReference type="ChEBI" id="CHEBI:65315"/>
        <dbReference type="ChEBI" id="CHEBI:87170"/>
        <dbReference type="ChEBI" id="CHEBI:456215"/>
        <dbReference type="EC" id="2.8.1.13"/>
    </reaction>
</comment>
<comment type="subcellular location">
    <subcellularLocation>
        <location evidence="1">Cytoplasm</location>
    </subcellularLocation>
</comment>
<comment type="similarity">
    <text evidence="1">Belongs to the MnmA/TRMU family.</text>
</comment>
<keyword id="KW-0067">ATP-binding</keyword>
<keyword id="KW-0963">Cytoplasm</keyword>
<keyword id="KW-1015">Disulfide bond</keyword>
<keyword id="KW-0547">Nucleotide-binding</keyword>
<keyword id="KW-0694">RNA-binding</keyword>
<keyword id="KW-0808">Transferase</keyword>
<keyword id="KW-0819">tRNA processing</keyword>
<keyword id="KW-0820">tRNA-binding</keyword>
<accession>B7UV15</accession>
<dbReference type="EC" id="2.8.1.13" evidence="1"/>
<dbReference type="EMBL" id="FM209186">
    <property type="protein sequence ID" value="CAW27205.1"/>
    <property type="molecule type" value="Genomic_DNA"/>
</dbReference>
<dbReference type="RefSeq" id="WP_003119971.1">
    <property type="nucleotide sequence ID" value="NC_011770.1"/>
</dbReference>
<dbReference type="SMR" id="B7UV15"/>
<dbReference type="KEGG" id="pag:PLES_24791"/>
<dbReference type="HOGENOM" id="CLU_035188_1_0_6"/>
<dbReference type="GO" id="GO:0005737">
    <property type="term" value="C:cytoplasm"/>
    <property type="evidence" value="ECO:0007669"/>
    <property type="project" value="UniProtKB-SubCell"/>
</dbReference>
<dbReference type="GO" id="GO:0005524">
    <property type="term" value="F:ATP binding"/>
    <property type="evidence" value="ECO:0007669"/>
    <property type="project" value="UniProtKB-KW"/>
</dbReference>
<dbReference type="GO" id="GO:0000049">
    <property type="term" value="F:tRNA binding"/>
    <property type="evidence" value="ECO:0007669"/>
    <property type="project" value="UniProtKB-KW"/>
</dbReference>
<dbReference type="GO" id="GO:0103016">
    <property type="term" value="F:tRNA-uridine 2-sulfurtransferase activity"/>
    <property type="evidence" value="ECO:0007669"/>
    <property type="project" value="UniProtKB-EC"/>
</dbReference>
<dbReference type="GO" id="GO:0002143">
    <property type="term" value="P:tRNA wobble position uridine thiolation"/>
    <property type="evidence" value="ECO:0007669"/>
    <property type="project" value="TreeGrafter"/>
</dbReference>
<dbReference type="CDD" id="cd01998">
    <property type="entry name" value="MnmA_TRMU-like"/>
    <property type="match status" value="1"/>
</dbReference>
<dbReference type="FunFam" id="2.30.30.280:FF:000001">
    <property type="entry name" value="tRNA-specific 2-thiouridylase MnmA"/>
    <property type="match status" value="1"/>
</dbReference>
<dbReference type="FunFam" id="2.40.30.10:FF:000023">
    <property type="entry name" value="tRNA-specific 2-thiouridylase MnmA"/>
    <property type="match status" value="1"/>
</dbReference>
<dbReference type="FunFam" id="3.40.50.620:FF:000004">
    <property type="entry name" value="tRNA-specific 2-thiouridylase MnmA"/>
    <property type="match status" value="1"/>
</dbReference>
<dbReference type="Gene3D" id="2.30.30.280">
    <property type="entry name" value="Adenine nucleotide alpha hydrolases-like domains"/>
    <property type="match status" value="1"/>
</dbReference>
<dbReference type="Gene3D" id="3.40.50.620">
    <property type="entry name" value="HUPs"/>
    <property type="match status" value="1"/>
</dbReference>
<dbReference type="Gene3D" id="2.40.30.10">
    <property type="entry name" value="Translation factors"/>
    <property type="match status" value="1"/>
</dbReference>
<dbReference type="HAMAP" id="MF_00144">
    <property type="entry name" value="tRNA_thiouridyl_MnmA"/>
    <property type="match status" value="1"/>
</dbReference>
<dbReference type="InterPro" id="IPR004506">
    <property type="entry name" value="MnmA-like"/>
</dbReference>
<dbReference type="InterPro" id="IPR046885">
    <property type="entry name" value="MnmA-like_C"/>
</dbReference>
<dbReference type="InterPro" id="IPR046884">
    <property type="entry name" value="MnmA-like_central"/>
</dbReference>
<dbReference type="InterPro" id="IPR023382">
    <property type="entry name" value="MnmA-like_central_sf"/>
</dbReference>
<dbReference type="InterPro" id="IPR014729">
    <property type="entry name" value="Rossmann-like_a/b/a_fold"/>
</dbReference>
<dbReference type="NCBIfam" id="NF001138">
    <property type="entry name" value="PRK00143.1"/>
    <property type="match status" value="1"/>
</dbReference>
<dbReference type="NCBIfam" id="TIGR00420">
    <property type="entry name" value="trmU"/>
    <property type="match status" value="1"/>
</dbReference>
<dbReference type="PANTHER" id="PTHR11933:SF5">
    <property type="entry name" value="MITOCHONDRIAL TRNA-SPECIFIC 2-THIOURIDYLASE 1"/>
    <property type="match status" value="1"/>
</dbReference>
<dbReference type="PANTHER" id="PTHR11933">
    <property type="entry name" value="TRNA 5-METHYLAMINOMETHYL-2-THIOURIDYLATE -METHYLTRANSFERASE"/>
    <property type="match status" value="1"/>
</dbReference>
<dbReference type="Pfam" id="PF03054">
    <property type="entry name" value="tRNA_Me_trans"/>
    <property type="match status" value="1"/>
</dbReference>
<dbReference type="Pfam" id="PF20258">
    <property type="entry name" value="tRNA_Me_trans_C"/>
    <property type="match status" value="1"/>
</dbReference>
<dbReference type="Pfam" id="PF20259">
    <property type="entry name" value="tRNA_Me_trans_M"/>
    <property type="match status" value="1"/>
</dbReference>
<dbReference type="SUPFAM" id="SSF52402">
    <property type="entry name" value="Adenine nucleotide alpha hydrolases-like"/>
    <property type="match status" value="1"/>
</dbReference>
<name>MNMA_PSEA8</name>
<organism>
    <name type="scientific">Pseudomonas aeruginosa (strain LESB58)</name>
    <dbReference type="NCBI Taxonomy" id="557722"/>
    <lineage>
        <taxon>Bacteria</taxon>
        <taxon>Pseudomonadati</taxon>
        <taxon>Pseudomonadota</taxon>
        <taxon>Gammaproteobacteria</taxon>
        <taxon>Pseudomonadales</taxon>
        <taxon>Pseudomonadaceae</taxon>
        <taxon>Pseudomonas</taxon>
    </lineage>
</organism>